<name>HISXH_COLP3</name>
<organism>
    <name type="scientific">Colwellia psychrerythraea (strain 34H / ATCC BAA-681)</name>
    <name type="common">Vibrio psychroerythus</name>
    <dbReference type="NCBI Taxonomy" id="167879"/>
    <lineage>
        <taxon>Bacteria</taxon>
        <taxon>Pseudomonadati</taxon>
        <taxon>Pseudomonadota</taxon>
        <taxon>Gammaproteobacteria</taxon>
        <taxon>Alteromonadales</taxon>
        <taxon>Colwelliaceae</taxon>
        <taxon>Colwellia</taxon>
    </lineage>
</organism>
<protein>
    <recommendedName>
        <fullName evidence="2">Histidinol dehydrogenase homolog</fullName>
        <ecNumber evidence="2">1.1.-.-</ecNumber>
    </recommendedName>
</protein>
<comment type="cofactor">
    <cofactor evidence="1">
        <name>Zn(2+)</name>
        <dbReference type="ChEBI" id="CHEBI:29105"/>
    </cofactor>
    <text evidence="1">Binds 1 zinc ion per subunit.</text>
</comment>
<comment type="similarity">
    <text evidence="2">Belongs to the histidinol dehydrogenase family.</text>
</comment>
<comment type="caution">
    <text evidence="2">The conserved zinc-binding site Asp residue in position 368 is replaced by an Asn.</text>
</comment>
<keyword id="KW-0479">Metal-binding</keyword>
<keyword id="KW-0560">Oxidoreductase</keyword>
<keyword id="KW-0862">Zinc</keyword>
<proteinExistence type="inferred from homology"/>
<accession>Q483H8</accession>
<gene>
    <name type="ordered locus">CPS_2061</name>
</gene>
<feature type="chain" id="PRO_0000135758" description="Histidinol dehydrogenase homolog">
    <location>
        <begin position="1"/>
        <end position="446"/>
    </location>
</feature>
<feature type="active site" description="Proton acceptor" evidence="1">
    <location>
        <position position="334"/>
    </location>
</feature>
<feature type="active site" description="Proton acceptor" evidence="1">
    <location>
        <position position="335"/>
    </location>
</feature>
<feature type="binding site" evidence="1">
    <location>
        <position position="266"/>
    </location>
    <ligand>
        <name>Zn(2+)</name>
        <dbReference type="ChEBI" id="CHEBI:29105"/>
    </ligand>
</feature>
<feature type="binding site" evidence="1">
    <location>
        <position position="427"/>
    </location>
    <ligand>
        <name>Zn(2+)</name>
        <dbReference type="ChEBI" id="CHEBI:29105"/>
    </ligand>
</feature>
<evidence type="ECO:0000250" key="1">
    <source>
        <dbReference type="UniProtKB" id="P06988"/>
    </source>
</evidence>
<evidence type="ECO:0000305" key="2"/>
<sequence length="446" mass="48236">MTHKVKIHRLSDLSAEQRNKLLQRTESNLDNFIDIVKPIIENVKLNGDKALSEYAKKFDKAEVSTDQIQVTQAEFDEAFTLVDEEVIQTLSYSIDNIKKFHEAQMPEEMWMKQIRPGCYAGDRFTPINAVACYIPRGKGSFPSVAIMTAVPAIVAGVPTAIIITPPGTDGKVDAATLVVAKLVGIDKVFKCGGAQGIAAVAYGTNTVPKCDKVVGPGSPFVVAAKKLLADIIHPGTPAGPSEAIVLADDTANPKLAALDLLVEAEHGPDSSAFLVTNSKELAEQAQVAINEYWQHMDRLRVDFSSTVLSGDNGGIVLTSTFEEAVDFCNDYAAEHLLILSKSPFDHLGKIINAGEILLGENTPISIANYTLGPNAVLPTSMAAKTASPLSVFDYLKSCSIGYLTREGYEELAPHTYRFAKYEGFDAHANAVSHLRDEAIKSEKKIK</sequence>
<reference key="1">
    <citation type="journal article" date="2005" name="Proc. Natl. Acad. Sci. U.S.A.">
        <title>The psychrophilic lifestyle as revealed by the genome sequence of Colwellia psychrerythraea 34H through genomic and proteomic analyses.</title>
        <authorList>
            <person name="Methe B.A."/>
            <person name="Nelson K.E."/>
            <person name="Deming J.W."/>
            <person name="Momen B."/>
            <person name="Melamud E."/>
            <person name="Zhang X."/>
            <person name="Moult J."/>
            <person name="Madupu R."/>
            <person name="Nelson W.C."/>
            <person name="Dodson R.J."/>
            <person name="Brinkac L.M."/>
            <person name="Daugherty S.C."/>
            <person name="Durkin A.S."/>
            <person name="DeBoy R.T."/>
            <person name="Kolonay J.F."/>
            <person name="Sullivan S.A."/>
            <person name="Zhou L."/>
            <person name="Davidsen T.M."/>
            <person name="Wu M."/>
            <person name="Huston A.L."/>
            <person name="Lewis M."/>
            <person name="Weaver B."/>
            <person name="Weidman J.F."/>
            <person name="Khouri H."/>
            <person name="Utterback T.R."/>
            <person name="Feldblyum T.V."/>
            <person name="Fraser C.M."/>
        </authorList>
    </citation>
    <scope>NUCLEOTIDE SEQUENCE [LARGE SCALE GENOMIC DNA]</scope>
    <source>
        <strain>34H / ATCC BAA-681</strain>
    </source>
</reference>
<dbReference type="EC" id="1.1.-.-" evidence="2"/>
<dbReference type="EMBL" id="CP000083">
    <property type="protein sequence ID" value="AAZ25938.1"/>
    <property type="molecule type" value="Genomic_DNA"/>
</dbReference>
<dbReference type="RefSeq" id="WP_011042883.1">
    <property type="nucleotide sequence ID" value="NC_003910.7"/>
</dbReference>
<dbReference type="SMR" id="Q483H8"/>
<dbReference type="STRING" id="167879.CPS_2061"/>
<dbReference type="KEGG" id="cps:CPS_2061"/>
<dbReference type="HOGENOM" id="CLU_006732_3_0_6"/>
<dbReference type="Proteomes" id="UP000000547">
    <property type="component" value="Chromosome"/>
</dbReference>
<dbReference type="GO" id="GO:0005829">
    <property type="term" value="C:cytosol"/>
    <property type="evidence" value="ECO:0007669"/>
    <property type="project" value="TreeGrafter"/>
</dbReference>
<dbReference type="GO" id="GO:0004399">
    <property type="term" value="F:histidinol dehydrogenase activity"/>
    <property type="evidence" value="ECO:0007669"/>
    <property type="project" value="InterPro"/>
</dbReference>
<dbReference type="GO" id="GO:0046872">
    <property type="term" value="F:metal ion binding"/>
    <property type="evidence" value="ECO:0007669"/>
    <property type="project" value="UniProtKB-KW"/>
</dbReference>
<dbReference type="GO" id="GO:0051287">
    <property type="term" value="F:NAD binding"/>
    <property type="evidence" value="ECO:0007669"/>
    <property type="project" value="InterPro"/>
</dbReference>
<dbReference type="GO" id="GO:0000105">
    <property type="term" value="P:L-histidine biosynthetic process"/>
    <property type="evidence" value="ECO:0007669"/>
    <property type="project" value="InterPro"/>
</dbReference>
<dbReference type="CDD" id="cd06572">
    <property type="entry name" value="Histidinol_dh"/>
    <property type="match status" value="1"/>
</dbReference>
<dbReference type="FunFam" id="3.40.50.1980:FF:000001">
    <property type="entry name" value="Histidinol dehydrogenase"/>
    <property type="match status" value="1"/>
</dbReference>
<dbReference type="Gene3D" id="1.20.5.1300">
    <property type="match status" value="1"/>
</dbReference>
<dbReference type="Gene3D" id="3.40.50.1980">
    <property type="entry name" value="Nitrogenase molybdenum iron protein domain"/>
    <property type="match status" value="2"/>
</dbReference>
<dbReference type="InterPro" id="IPR016161">
    <property type="entry name" value="Ald_DH/histidinol_DH"/>
</dbReference>
<dbReference type="InterPro" id="IPR001692">
    <property type="entry name" value="Histidinol_DH_CS"/>
</dbReference>
<dbReference type="InterPro" id="IPR022695">
    <property type="entry name" value="Histidinol_DH_monofunct"/>
</dbReference>
<dbReference type="InterPro" id="IPR012131">
    <property type="entry name" value="Hstdl_DH"/>
</dbReference>
<dbReference type="NCBIfam" id="TIGR00069">
    <property type="entry name" value="hisD"/>
    <property type="match status" value="1"/>
</dbReference>
<dbReference type="PANTHER" id="PTHR21256:SF2">
    <property type="entry name" value="HISTIDINE BIOSYNTHESIS TRIFUNCTIONAL PROTEIN"/>
    <property type="match status" value="1"/>
</dbReference>
<dbReference type="PANTHER" id="PTHR21256">
    <property type="entry name" value="HISTIDINOL DEHYDROGENASE HDH"/>
    <property type="match status" value="1"/>
</dbReference>
<dbReference type="Pfam" id="PF00815">
    <property type="entry name" value="Histidinol_dh"/>
    <property type="match status" value="1"/>
</dbReference>
<dbReference type="PIRSF" id="PIRSF000099">
    <property type="entry name" value="Histidinol_dh"/>
    <property type="match status" value="1"/>
</dbReference>
<dbReference type="PRINTS" id="PR00083">
    <property type="entry name" value="HOLDHDRGNASE"/>
</dbReference>
<dbReference type="SUPFAM" id="SSF53720">
    <property type="entry name" value="ALDH-like"/>
    <property type="match status" value="1"/>
</dbReference>
<dbReference type="PROSITE" id="PS00611">
    <property type="entry name" value="HISOL_DEHYDROGENASE"/>
    <property type="match status" value="1"/>
</dbReference>